<proteinExistence type="inferred from homology"/>
<gene>
    <name evidence="1" type="primary">sfsA</name>
    <name type="ordered locus">PMT_1852</name>
</gene>
<reference key="1">
    <citation type="journal article" date="2003" name="Nature">
        <title>Genome divergence in two Prochlorococcus ecotypes reflects oceanic niche differentiation.</title>
        <authorList>
            <person name="Rocap G."/>
            <person name="Larimer F.W."/>
            <person name="Lamerdin J.E."/>
            <person name="Malfatti S."/>
            <person name="Chain P."/>
            <person name="Ahlgren N.A."/>
            <person name="Arellano A."/>
            <person name="Coleman M."/>
            <person name="Hauser L."/>
            <person name="Hess W.R."/>
            <person name="Johnson Z.I."/>
            <person name="Land M.L."/>
            <person name="Lindell D."/>
            <person name="Post A.F."/>
            <person name="Regala W."/>
            <person name="Shah M."/>
            <person name="Shaw S.L."/>
            <person name="Steglich C."/>
            <person name="Sullivan M.B."/>
            <person name="Ting C.S."/>
            <person name="Tolonen A."/>
            <person name="Webb E.A."/>
            <person name="Zinser E.R."/>
            <person name="Chisholm S.W."/>
        </authorList>
    </citation>
    <scope>NUCLEOTIDE SEQUENCE [LARGE SCALE GENOMIC DNA]</scope>
    <source>
        <strain>MIT 9313</strain>
    </source>
</reference>
<dbReference type="EMBL" id="BX548175">
    <property type="protein sequence ID" value="CAE22027.1"/>
    <property type="status" value="ALT_INIT"/>
    <property type="molecule type" value="Genomic_DNA"/>
</dbReference>
<dbReference type="SMR" id="Q7V4T9"/>
<dbReference type="DNASU" id="1728831"/>
<dbReference type="KEGG" id="pmt:PMT_1852"/>
<dbReference type="eggNOG" id="COG1489">
    <property type="taxonomic scope" value="Bacteria"/>
</dbReference>
<dbReference type="HOGENOM" id="CLU_052299_2_0_3"/>
<dbReference type="Proteomes" id="UP000001423">
    <property type="component" value="Chromosome"/>
</dbReference>
<dbReference type="GO" id="GO:0003677">
    <property type="term" value="F:DNA binding"/>
    <property type="evidence" value="ECO:0007669"/>
    <property type="project" value="InterPro"/>
</dbReference>
<dbReference type="CDD" id="cd22359">
    <property type="entry name" value="SfsA-like_bacterial"/>
    <property type="match status" value="1"/>
</dbReference>
<dbReference type="Gene3D" id="2.40.50.580">
    <property type="match status" value="1"/>
</dbReference>
<dbReference type="Gene3D" id="3.40.1350.60">
    <property type="match status" value="1"/>
</dbReference>
<dbReference type="HAMAP" id="MF_00095">
    <property type="entry name" value="SfsA"/>
    <property type="match status" value="1"/>
</dbReference>
<dbReference type="InterPro" id="IPR005224">
    <property type="entry name" value="SfsA"/>
</dbReference>
<dbReference type="InterPro" id="IPR040452">
    <property type="entry name" value="SfsA_C"/>
</dbReference>
<dbReference type="InterPro" id="IPR041465">
    <property type="entry name" value="SfsA_N"/>
</dbReference>
<dbReference type="NCBIfam" id="TIGR00230">
    <property type="entry name" value="sfsA"/>
    <property type="match status" value="1"/>
</dbReference>
<dbReference type="PANTHER" id="PTHR30545">
    <property type="entry name" value="SUGAR FERMENTATION STIMULATION PROTEIN A"/>
    <property type="match status" value="1"/>
</dbReference>
<dbReference type="PANTHER" id="PTHR30545:SF2">
    <property type="entry name" value="SUGAR FERMENTATION STIMULATION PROTEIN A"/>
    <property type="match status" value="1"/>
</dbReference>
<dbReference type="Pfam" id="PF03749">
    <property type="entry name" value="SfsA"/>
    <property type="match status" value="1"/>
</dbReference>
<dbReference type="Pfam" id="PF17746">
    <property type="entry name" value="SfsA_N"/>
    <property type="match status" value="1"/>
</dbReference>
<feature type="chain" id="PRO_0000152296" description="Sugar fermentation stimulation protein homolog">
    <location>
        <begin position="1"/>
        <end position="251"/>
    </location>
</feature>
<protein>
    <recommendedName>
        <fullName evidence="1">Sugar fermentation stimulation protein homolog</fullName>
    </recommendedName>
</protein>
<organism>
    <name type="scientific">Prochlorococcus marinus (strain MIT 9313)</name>
    <dbReference type="NCBI Taxonomy" id="74547"/>
    <lineage>
        <taxon>Bacteria</taxon>
        <taxon>Bacillati</taxon>
        <taxon>Cyanobacteriota</taxon>
        <taxon>Cyanophyceae</taxon>
        <taxon>Synechococcales</taxon>
        <taxon>Prochlorococcaceae</taxon>
        <taxon>Prochlorococcus</taxon>
    </lineage>
</organism>
<comment type="similarity">
    <text evidence="1">Belongs to the SfsA family.</text>
</comment>
<comment type="sequence caution" evidence="2">
    <conflict type="erroneous initiation">
        <sequence resource="EMBL-CDS" id="CAE22027"/>
    </conflict>
</comment>
<keyword id="KW-1185">Reference proteome</keyword>
<accession>Q7V4T9</accession>
<name>SFSA_PROMM</name>
<sequence length="251" mass="27468">MLGSPLLTFPPLDEGILVKRYKRFLADVELVSGEIVTAHCANTGPMTGVLHPGGRVRIRHAPSPKRKLAWTWEQAEAPSAQGGLCWVGINTALANSLIRAAIEAGHLKQVLGPIAAIRAEVTYGSNRRSRIDLFLTPDANCSDTRPIYLEVKNTTWIEDSLALFPDTVTERGQKHLKELIGVLPESRAVLVPCLSRHDVQAFAPGDSADPRYGELFRLALTAGVEVIPCCFGFHLDKITWEGLRPTKTTQS</sequence>
<evidence type="ECO:0000255" key="1">
    <source>
        <dbReference type="HAMAP-Rule" id="MF_00095"/>
    </source>
</evidence>
<evidence type="ECO:0000305" key="2"/>